<feature type="chain" id="PRO_0000408918" description="SWI5-dependent HO expression protein 2">
    <location>
        <begin position="1"/>
        <end position="241"/>
    </location>
</feature>
<gene>
    <name type="primary">SHE2</name>
    <name type="ordered locus">KLLA0B12518g</name>
</gene>
<name>SHE2_KLULA</name>
<comment type="function">
    <text evidence="1">RNA-binding protein that binds specific mRNAs including the ASH1 mRNA, coding for a repressor of the HO endonuclease. Part of the mRNA localization machinery that restricts accumulation of certain proteins to the bud and in the daughter cell (By similarity).</text>
</comment>
<comment type="subunit">
    <text evidence="1">Homodimer and homotetramer.</text>
</comment>
<comment type="subcellular location">
    <subcellularLocation>
        <location evidence="2">Cytoplasm</location>
    </subcellularLocation>
    <subcellularLocation>
        <location evidence="2">Nucleus</location>
    </subcellularLocation>
    <text evidence="2">Shuttles between the nucleus and cytoplasm and is exported in an mRNA-dependent manner. The presence in the nucleus is essential for PUF6 and LOC1 to bind the ASH1 mRNA.</text>
</comment>
<comment type="similarity">
    <text evidence="3">Belongs to the SHE2 family.</text>
</comment>
<keyword id="KW-0963">Cytoplasm</keyword>
<keyword id="KW-0509">mRNA transport</keyword>
<keyword id="KW-0539">Nucleus</keyword>
<keyword id="KW-1185">Reference proteome</keyword>
<keyword id="KW-0694">RNA-binding</keyword>
<keyword id="KW-0813">Transport</keyword>
<reference key="1">
    <citation type="journal article" date="2004" name="Nature">
        <title>Genome evolution in yeasts.</title>
        <authorList>
            <person name="Dujon B."/>
            <person name="Sherman D."/>
            <person name="Fischer G."/>
            <person name="Durrens P."/>
            <person name="Casaregola S."/>
            <person name="Lafontaine I."/>
            <person name="de Montigny J."/>
            <person name="Marck C."/>
            <person name="Neuveglise C."/>
            <person name="Talla E."/>
            <person name="Goffard N."/>
            <person name="Frangeul L."/>
            <person name="Aigle M."/>
            <person name="Anthouard V."/>
            <person name="Babour A."/>
            <person name="Barbe V."/>
            <person name="Barnay S."/>
            <person name="Blanchin S."/>
            <person name="Beckerich J.-M."/>
            <person name="Beyne E."/>
            <person name="Bleykasten C."/>
            <person name="Boisrame A."/>
            <person name="Boyer J."/>
            <person name="Cattolico L."/>
            <person name="Confanioleri F."/>
            <person name="de Daruvar A."/>
            <person name="Despons L."/>
            <person name="Fabre E."/>
            <person name="Fairhead C."/>
            <person name="Ferry-Dumazet H."/>
            <person name="Groppi A."/>
            <person name="Hantraye F."/>
            <person name="Hennequin C."/>
            <person name="Jauniaux N."/>
            <person name="Joyet P."/>
            <person name="Kachouri R."/>
            <person name="Kerrest A."/>
            <person name="Koszul R."/>
            <person name="Lemaire M."/>
            <person name="Lesur I."/>
            <person name="Ma L."/>
            <person name="Muller H."/>
            <person name="Nicaud J.-M."/>
            <person name="Nikolski M."/>
            <person name="Oztas S."/>
            <person name="Ozier-Kalogeropoulos O."/>
            <person name="Pellenz S."/>
            <person name="Potier S."/>
            <person name="Richard G.-F."/>
            <person name="Straub M.-L."/>
            <person name="Suleau A."/>
            <person name="Swennen D."/>
            <person name="Tekaia F."/>
            <person name="Wesolowski-Louvel M."/>
            <person name="Westhof E."/>
            <person name="Wirth B."/>
            <person name="Zeniou-Meyer M."/>
            <person name="Zivanovic Y."/>
            <person name="Bolotin-Fukuhara M."/>
            <person name="Thierry A."/>
            <person name="Bouchier C."/>
            <person name="Caudron B."/>
            <person name="Scarpelli C."/>
            <person name="Gaillardin C."/>
            <person name="Weissenbach J."/>
            <person name="Wincker P."/>
            <person name="Souciet J.-L."/>
        </authorList>
    </citation>
    <scope>NUCLEOTIDE SEQUENCE [LARGE SCALE GENOMIC DNA]</scope>
    <source>
        <strain>ATCC 8585 / CBS 2359 / DSM 70799 / NBRC 1267 / NRRL Y-1140 / WM37</strain>
    </source>
</reference>
<sequence length="241" mass="28078">MAYCQVVISKEILDAVLQLVSTYSNYISRYVDYLNNLIAVQRRVSTLRFERMTLIKYVKKLRFMADVLHSWSFEGENDLIGKRLNEVIDPLGAYLIKVFEILDLLNFYITQPMRGETISKTLNEDLVVSEETIVCINDSYRIYIKGIQWLVESISERNGNCPHLALELIEFTRKCAIEDEVDFTASEDILLQDVAIVEVEEEYVDLLHDWSAILVQKQTEMKELFSEDSKRWASMTKPVKK</sequence>
<evidence type="ECO:0000250" key="1"/>
<evidence type="ECO:0000250" key="2">
    <source>
        <dbReference type="UniProtKB" id="P36068"/>
    </source>
</evidence>
<evidence type="ECO:0000305" key="3"/>
<dbReference type="EMBL" id="CR382122">
    <property type="protein sequence ID" value="CAH02481.1"/>
    <property type="molecule type" value="Genomic_DNA"/>
</dbReference>
<dbReference type="RefSeq" id="XP_452088.1">
    <property type="nucleotide sequence ID" value="XM_452088.1"/>
</dbReference>
<dbReference type="SMR" id="Q6CVF1"/>
<dbReference type="FunCoup" id="Q6CVF1">
    <property type="interactions" value="119"/>
</dbReference>
<dbReference type="STRING" id="284590.Q6CVF1"/>
<dbReference type="PaxDb" id="284590-Q6CVF1"/>
<dbReference type="KEGG" id="kla:KLLA0_B12518g"/>
<dbReference type="eggNOG" id="ENOG502RXWH">
    <property type="taxonomic scope" value="Eukaryota"/>
</dbReference>
<dbReference type="HOGENOM" id="CLU_1129832_0_0_1"/>
<dbReference type="InParanoid" id="Q6CVF1"/>
<dbReference type="OMA" id="HFVKFTQ"/>
<dbReference type="Proteomes" id="UP000000598">
    <property type="component" value="Chromosome B"/>
</dbReference>
<dbReference type="GO" id="GO:0005737">
    <property type="term" value="C:cytoplasm"/>
    <property type="evidence" value="ECO:0007669"/>
    <property type="project" value="UniProtKB-SubCell"/>
</dbReference>
<dbReference type="GO" id="GO:0005634">
    <property type="term" value="C:nucleus"/>
    <property type="evidence" value="ECO:0007669"/>
    <property type="project" value="UniProtKB-SubCell"/>
</dbReference>
<dbReference type="GO" id="GO:0003723">
    <property type="term" value="F:RNA binding"/>
    <property type="evidence" value="ECO:0007669"/>
    <property type="project" value="UniProtKB-KW"/>
</dbReference>
<dbReference type="GO" id="GO:0051028">
    <property type="term" value="P:mRNA transport"/>
    <property type="evidence" value="ECO:0007669"/>
    <property type="project" value="UniProtKB-KW"/>
</dbReference>
<dbReference type="Gene3D" id="1.20.200.20">
    <property type="entry name" value="She2 domain"/>
    <property type="match status" value="1"/>
</dbReference>
<dbReference type="InterPro" id="IPR024261">
    <property type="entry name" value="RNA-bd_She2"/>
</dbReference>
<dbReference type="InterPro" id="IPR036827">
    <property type="entry name" value="She2_dom_sf"/>
</dbReference>
<dbReference type="Pfam" id="PF11435">
    <property type="entry name" value="She2p"/>
    <property type="match status" value="1"/>
</dbReference>
<dbReference type="SUPFAM" id="SSF116942">
    <property type="entry name" value="RNA-binding protein She2p"/>
    <property type="match status" value="1"/>
</dbReference>
<proteinExistence type="inferred from homology"/>
<accession>Q6CVF1</accession>
<organism>
    <name type="scientific">Kluyveromyces lactis (strain ATCC 8585 / CBS 2359 / DSM 70799 / NBRC 1267 / NRRL Y-1140 / WM37)</name>
    <name type="common">Yeast</name>
    <name type="synonym">Candida sphaerica</name>
    <dbReference type="NCBI Taxonomy" id="284590"/>
    <lineage>
        <taxon>Eukaryota</taxon>
        <taxon>Fungi</taxon>
        <taxon>Dikarya</taxon>
        <taxon>Ascomycota</taxon>
        <taxon>Saccharomycotina</taxon>
        <taxon>Saccharomycetes</taxon>
        <taxon>Saccharomycetales</taxon>
        <taxon>Saccharomycetaceae</taxon>
        <taxon>Kluyveromyces</taxon>
    </lineage>
</organism>
<protein>
    <recommendedName>
        <fullName>SWI5-dependent HO expression protein 2</fullName>
    </recommendedName>
</protein>